<dbReference type="EC" id="2.7.1.11" evidence="1"/>
<dbReference type="EMBL" id="AE017332">
    <property type="protein sequence ID" value="AAV27490.1"/>
    <property type="molecule type" value="Genomic_DNA"/>
</dbReference>
<dbReference type="RefSeq" id="WP_011206106.1">
    <property type="nucleotide sequence ID" value="NC_006360.1"/>
</dbReference>
<dbReference type="SMR" id="Q601D3"/>
<dbReference type="KEGG" id="mhy:mhp269"/>
<dbReference type="eggNOG" id="COG0205">
    <property type="taxonomic scope" value="Bacteria"/>
</dbReference>
<dbReference type="HOGENOM" id="CLU_020655_0_1_14"/>
<dbReference type="PhylomeDB" id="Q601D3"/>
<dbReference type="UniPathway" id="UPA00109">
    <property type="reaction ID" value="UER00182"/>
</dbReference>
<dbReference type="Proteomes" id="UP000006822">
    <property type="component" value="Chromosome"/>
</dbReference>
<dbReference type="GO" id="GO:0005945">
    <property type="term" value="C:6-phosphofructokinase complex"/>
    <property type="evidence" value="ECO:0007669"/>
    <property type="project" value="TreeGrafter"/>
</dbReference>
<dbReference type="GO" id="GO:0003872">
    <property type="term" value="F:6-phosphofructokinase activity"/>
    <property type="evidence" value="ECO:0007669"/>
    <property type="project" value="UniProtKB-UniRule"/>
</dbReference>
<dbReference type="GO" id="GO:0016208">
    <property type="term" value="F:AMP binding"/>
    <property type="evidence" value="ECO:0007669"/>
    <property type="project" value="TreeGrafter"/>
</dbReference>
<dbReference type="GO" id="GO:0005524">
    <property type="term" value="F:ATP binding"/>
    <property type="evidence" value="ECO:0007669"/>
    <property type="project" value="UniProtKB-KW"/>
</dbReference>
<dbReference type="GO" id="GO:0070095">
    <property type="term" value="F:fructose-6-phosphate binding"/>
    <property type="evidence" value="ECO:0007669"/>
    <property type="project" value="TreeGrafter"/>
</dbReference>
<dbReference type="GO" id="GO:0042802">
    <property type="term" value="F:identical protein binding"/>
    <property type="evidence" value="ECO:0007669"/>
    <property type="project" value="TreeGrafter"/>
</dbReference>
<dbReference type="GO" id="GO:0046872">
    <property type="term" value="F:metal ion binding"/>
    <property type="evidence" value="ECO:0007669"/>
    <property type="project" value="UniProtKB-KW"/>
</dbReference>
<dbReference type="GO" id="GO:0048029">
    <property type="term" value="F:monosaccharide binding"/>
    <property type="evidence" value="ECO:0007669"/>
    <property type="project" value="TreeGrafter"/>
</dbReference>
<dbReference type="GO" id="GO:0061621">
    <property type="term" value="P:canonical glycolysis"/>
    <property type="evidence" value="ECO:0007669"/>
    <property type="project" value="TreeGrafter"/>
</dbReference>
<dbReference type="GO" id="GO:0030388">
    <property type="term" value="P:fructose 1,6-bisphosphate metabolic process"/>
    <property type="evidence" value="ECO:0007669"/>
    <property type="project" value="TreeGrafter"/>
</dbReference>
<dbReference type="GO" id="GO:0006002">
    <property type="term" value="P:fructose 6-phosphate metabolic process"/>
    <property type="evidence" value="ECO:0007669"/>
    <property type="project" value="InterPro"/>
</dbReference>
<dbReference type="FunFam" id="3.40.50.460:FF:000002">
    <property type="entry name" value="ATP-dependent 6-phosphofructokinase"/>
    <property type="match status" value="1"/>
</dbReference>
<dbReference type="Gene3D" id="3.40.50.450">
    <property type="match status" value="1"/>
</dbReference>
<dbReference type="Gene3D" id="3.40.50.460">
    <property type="entry name" value="Phosphofructokinase domain"/>
    <property type="match status" value="1"/>
</dbReference>
<dbReference type="HAMAP" id="MF_00339">
    <property type="entry name" value="Phosphofructokinase_I_B1"/>
    <property type="match status" value="1"/>
</dbReference>
<dbReference type="InterPro" id="IPR022953">
    <property type="entry name" value="ATP_PFK"/>
</dbReference>
<dbReference type="InterPro" id="IPR012003">
    <property type="entry name" value="ATP_PFK_prok-type"/>
</dbReference>
<dbReference type="InterPro" id="IPR012828">
    <property type="entry name" value="PFKA_ATP_prok"/>
</dbReference>
<dbReference type="InterPro" id="IPR015912">
    <property type="entry name" value="Phosphofructokinase_CS"/>
</dbReference>
<dbReference type="InterPro" id="IPR000023">
    <property type="entry name" value="Phosphofructokinase_dom"/>
</dbReference>
<dbReference type="InterPro" id="IPR035966">
    <property type="entry name" value="PKF_sf"/>
</dbReference>
<dbReference type="NCBIfam" id="TIGR02482">
    <property type="entry name" value="PFKA_ATP"/>
    <property type="match status" value="1"/>
</dbReference>
<dbReference type="NCBIfam" id="NF002872">
    <property type="entry name" value="PRK03202.1"/>
    <property type="match status" value="1"/>
</dbReference>
<dbReference type="PANTHER" id="PTHR13697:SF4">
    <property type="entry name" value="ATP-DEPENDENT 6-PHOSPHOFRUCTOKINASE"/>
    <property type="match status" value="1"/>
</dbReference>
<dbReference type="PANTHER" id="PTHR13697">
    <property type="entry name" value="PHOSPHOFRUCTOKINASE"/>
    <property type="match status" value="1"/>
</dbReference>
<dbReference type="Pfam" id="PF00365">
    <property type="entry name" value="PFK"/>
    <property type="match status" value="1"/>
</dbReference>
<dbReference type="PIRSF" id="PIRSF000532">
    <property type="entry name" value="ATP_PFK_prok"/>
    <property type="match status" value="1"/>
</dbReference>
<dbReference type="PRINTS" id="PR00476">
    <property type="entry name" value="PHFRCTKINASE"/>
</dbReference>
<dbReference type="SUPFAM" id="SSF53784">
    <property type="entry name" value="Phosphofructokinase"/>
    <property type="match status" value="1"/>
</dbReference>
<dbReference type="PROSITE" id="PS00433">
    <property type="entry name" value="PHOSPHOFRUCTOKINASE"/>
    <property type="match status" value="1"/>
</dbReference>
<comment type="function">
    <text evidence="1">Catalyzes the phosphorylation of D-fructose 6-phosphate to fructose 1,6-bisphosphate by ATP, the first committing step of glycolysis.</text>
</comment>
<comment type="catalytic activity">
    <reaction evidence="1">
        <text>beta-D-fructose 6-phosphate + ATP = beta-D-fructose 1,6-bisphosphate + ADP + H(+)</text>
        <dbReference type="Rhea" id="RHEA:16109"/>
        <dbReference type="ChEBI" id="CHEBI:15378"/>
        <dbReference type="ChEBI" id="CHEBI:30616"/>
        <dbReference type="ChEBI" id="CHEBI:32966"/>
        <dbReference type="ChEBI" id="CHEBI:57634"/>
        <dbReference type="ChEBI" id="CHEBI:456216"/>
        <dbReference type="EC" id="2.7.1.11"/>
    </reaction>
</comment>
<comment type="cofactor">
    <cofactor evidence="1">
        <name>Mg(2+)</name>
        <dbReference type="ChEBI" id="CHEBI:18420"/>
    </cofactor>
</comment>
<comment type="activity regulation">
    <text evidence="1">Allosterically activated by ADP and other diphosphonucleosides, and allosterically inhibited by phosphoenolpyruvate.</text>
</comment>
<comment type="pathway">
    <text evidence="1">Carbohydrate degradation; glycolysis; D-glyceraldehyde 3-phosphate and glycerone phosphate from D-glucose: step 3/4.</text>
</comment>
<comment type="subunit">
    <text evidence="1">Homotetramer.</text>
</comment>
<comment type="subcellular location">
    <subcellularLocation>
        <location evidence="1">Cytoplasm</location>
    </subcellularLocation>
</comment>
<comment type="similarity">
    <text evidence="1">Belongs to the phosphofructokinase type A (PFKA) family. ATP-dependent PFK group I subfamily. Prokaryotic clade 'B1' sub-subfamily.</text>
</comment>
<keyword id="KW-0021">Allosteric enzyme</keyword>
<keyword id="KW-0067">ATP-binding</keyword>
<keyword id="KW-0963">Cytoplasm</keyword>
<keyword id="KW-0324">Glycolysis</keyword>
<keyword id="KW-0418">Kinase</keyword>
<keyword id="KW-0460">Magnesium</keyword>
<keyword id="KW-0479">Metal-binding</keyword>
<keyword id="KW-0547">Nucleotide-binding</keyword>
<keyword id="KW-0808">Transferase</keyword>
<protein>
    <recommendedName>
        <fullName evidence="1">ATP-dependent 6-phosphofructokinase</fullName>
        <shortName evidence="1">ATP-PFK</shortName>
        <shortName evidence="1">Phosphofructokinase</shortName>
        <ecNumber evidence="1">2.7.1.11</ecNumber>
    </recommendedName>
    <alternativeName>
        <fullName evidence="1">Phosphohexokinase</fullName>
    </alternativeName>
</protein>
<proteinExistence type="inferred from homology"/>
<name>PFKA_MESH2</name>
<gene>
    <name evidence="1" type="primary">pfkA</name>
    <name type="ordered locus">mhp269</name>
</gene>
<reference key="1">
    <citation type="journal article" date="2004" name="J. Bacteriol.">
        <title>The genome sequence of Mycoplasma hyopneumoniae strain 232, the agent of swine mycoplasmosis.</title>
        <authorList>
            <person name="Minion F.C."/>
            <person name="Lefkowitz E.J."/>
            <person name="Madsen M.L."/>
            <person name="Cleary B.J."/>
            <person name="Swartzell S.M."/>
            <person name="Mahairas G.G."/>
        </authorList>
    </citation>
    <scope>NUCLEOTIDE SEQUENCE [LARGE SCALE GENOMIC DNA]</scope>
    <source>
        <strain>232</strain>
    </source>
</reference>
<evidence type="ECO:0000255" key="1">
    <source>
        <dbReference type="HAMAP-Rule" id="MF_00339"/>
    </source>
</evidence>
<accession>Q601D3</accession>
<sequence length="322" mass="34961">MSKKIGILTSGGDAPGMNSAISFLAKSALSLGFEPYLIFDGYSGIIARKILPAKNFPYNGISSFGGTAIGSSRFPEFKKEEVQNKAVEILSEIGISSLVVVGGDGTYNGGYKLHLKGIKVIALPGTIDNDIQFTDYTIGFDTALNTIVETIDKLRDTANSHRRCFVVEVMGRHCQDLALYSAIATGSEILITNTNILTPEEVSQRVLEQFAKGKPSVIVTITENILPNLKEFAAKIEELTKISTRSLEVGHTQRGGRPSAFDRILAAKMAMKAMELINQDKSGLAISYLDGKIQTFDIAKVVSKPVRKTNDLVLEINKINQN</sequence>
<organism>
    <name type="scientific">Mesomycoplasma hyopneumoniae (strain 232)</name>
    <name type="common">Mycoplasma hyopneumoniae</name>
    <dbReference type="NCBI Taxonomy" id="295358"/>
    <lineage>
        <taxon>Bacteria</taxon>
        <taxon>Bacillati</taxon>
        <taxon>Mycoplasmatota</taxon>
        <taxon>Mycoplasmoidales</taxon>
        <taxon>Metamycoplasmataceae</taxon>
        <taxon>Mesomycoplasma</taxon>
    </lineage>
</organism>
<feature type="chain" id="PRO_1000059779" description="ATP-dependent 6-phosphofructokinase">
    <location>
        <begin position="1"/>
        <end position="322"/>
    </location>
</feature>
<feature type="active site" description="Proton acceptor" evidence="1">
    <location>
        <position position="128"/>
    </location>
</feature>
<feature type="binding site" evidence="1">
    <location>
        <position position="12"/>
    </location>
    <ligand>
        <name>ATP</name>
        <dbReference type="ChEBI" id="CHEBI:30616"/>
    </ligand>
</feature>
<feature type="binding site" evidence="1">
    <location>
        <begin position="73"/>
        <end position="74"/>
    </location>
    <ligand>
        <name>ATP</name>
        <dbReference type="ChEBI" id="CHEBI:30616"/>
    </ligand>
</feature>
<feature type="binding site" evidence="1">
    <location>
        <begin position="103"/>
        <end position="106"/>
    </location>
    <ligand>
        <name>ATP</name>
        <dbReference type="ChEBI" id="CHEBI:30616"/>
    </ligand>
</feature>
<feature type="binding site" evidence="1">
    <location>
        <position position="104"/>
    </location>
    <ligand>
        <name>Mg(2+)</name>
        <dbReference type="ChEBI" id="CHEBI:18420"/>
        <note>catalytic</note>
    </ligand>
</feature>
<feature type="binding site" description="in other chain" evidence="1">
    <location>
        <begin position="126"/>
        <end position="128"/>
    </location>
    <ligand>
        <name>substrate</name>
        <note>ligand shared between dimeric partners</note>
    </ligand>
</feature>
<feature type="binding site" evidence="1">
    <location>
        <position position="155"/>
    </location>
    <ligand>
        <name>ADP</name>
        <dbReference type="ChEBI" id="CHEBI:456216"/>
        <note>allosteric activator</note>
    </ligand>
</feature>
<feature type="binding site" evidence="1">
    <location>
        <position position="163"/>
    </location>
    <ligand>
        <name>substrate</name>
        <note>ligand shared between dimeric partners</note>
    </ligand>
</feature>
<feature type="binding site" description="in other chain" evidence="1">
    <location>
        <begin position="170"/>
        <end position="172"/>
    </location>
    <ligand>
        <name>substrate</name>
        <note>ligand shared between dimeric partners</note>
    </ligand>
</feature>
<feature type="binding site" evidence="1">
    <location>
        <begin position="186"/>
        <end position="188"/>
    </location>
    <ligand>
        <name>ADP</name>
        <dbReference type="ChEBI" id="CHEBI:456216"/>
        <note>allosteric activator</note>
    </ligand>
</feature>
<feature type="binding site" evidence="1">
    <location>
        <position position="212"/>
    </location>
    <ligand>
        <name>ADP</name>
        <dbReference type="ChEBI" id="CHEBI:456216"/>
        <note>allosteric activator</note>
    </ligand>
</feature>
<feature type="binding site" evidence="1">
    <location>
        <begin position="214"/>
        <end position="216"/>
    </location>
    <ligand>
        <name>ADP</name>
        <dbReference type="ChEBI" id="CHEBI:456216"/>
        <note>allosteric activator</note>
    </ligand>
</feature>
<feature type="binding site" description="in other chain" evidence="1">
    <location>
        <position position="223"/>
    </location>
    <ligand>
        <name>substrate</name>
        <note>ligand shared between dimeric partners</note>
    </ligand>
</feature>
<feature type="binding site" evidence="1">
    <location>
        <position position="245"/>
    </location>
    <ligand>
        <name>substrate</name>
        <note>ligand shared between dimeric partners</note>
    </ligand>
</feature>
<feature type="binding site" description="in other chain" evidence="1">
    <location>
        <begin position="251"/>
        <end position="254"/>
    </location>
    <ligand>
        <name>substrate</name>
        <note>ligand shared between dimeric partners</note>
    </ligand>
</feature>